<accession>A4TJC7</accession>
<name>NHAB_YERPP</name>
<proteinExistence type="inferred from homology"/>
<organism>
    <name type="scientific">Yersinia pestis (strain Pestoides F)</name>
    <dbReference type="NCBI Taxonomy" id="386656"/>
    <lineage>
        <taxon>Bacteria</taxon>
        <taxon>Pseudomonadati</taxon>
        <taxon>Pseudomonadota</taxon>
        <taxon>Gammaproteobacteria</taxon>
        <taxon>Enterobacterales</taxon>
        <taxon>Yersiniaceae</taxon>
        <taxon>Yersinia</taxon>
    </lineage>
</organism>
<keyword id="KW-0050">Antiport</keyword>
<keyword id="KW-0997">Cell inner membrane</keyword>
<keyword id="KW-1003">Cell membrane</keyword>
<keyword id="KW-0406">Ion transport</keyword>
<keyword id="KW-0472">Membrane</keyword>
<keyword id="KW-0915">Sodium</keyword>
<keyword id="KW-0739">Sodium transport</keyword>
<keyword id="KW-0812">Transmembrane</keyword>
<keyword id="KW-1133">Transmembrane helix</keyword>
<keyword id="KW-0813">Transport</keyword>
<evidence type="ECO:0000255" key="1">
    <source>
        <dbReference type="HAMAP-Rule" id="MF_01599"/>
    </source>
</evidence>
<dbReference type="EMBL" id="CP000668">
    <property type="protein sequence ID" value="ABP39389.1"/>
    <property type="molecule type" value="Genomic_DNA"/>
</dbReference>
<dbReference type="RefSeq" id="WP_002211689.1">
    <property type="nucleotide sequence ID" value="NZ_CP009715.1"/>
</dbReference>
<dbReference type="SMR" id="A4TJC7"/>
<dbReference type="GeneID" id="57976523"/>
<dbReference type="KEGG" id="ypp:YPDSF_0989"/>
<dbReference type="PATRIC" id="fig|386656.14.peg.2857"/>
<dbReference type="GO" id="GO:0005886">
    <property type="term" value="C:plasma membrane"/>
    <property type="evidence" value="ECO:0007669"/>
    <property type="project" value="UniProtKB-SubCell"/>
</dbReference>
<dbReference type="GO" id="GO:0015385">
    <property type="term" value="F:sodium:proton antiporter activity"/>
    <property type="evidence" value="ECO:0007669"/>
    <property type="project" value="InterPro"/>
</dbReference>
<dbReference type="HAMAP" id="MF_01599">
    <property type="entry name" value="NhaB"/>
    <property type="match status" value="1"/>
</dbReference>
<dbReference type="InterPro" id="IPR004671">
    <property type="entry name" value="Na+/H+_antiporter_NhaB"/>
</dbReference>
<dbReference type="NCBIfam" id="TIGR00774">
    <property type="entry name" value="NhaB"/>
    <property type="match status" value="1"/>
</dbReference>
<dbReference type="NCBIfam" id="NF007093">
    <property type="entry name" value="PRK09547.1"/>
    <property type="match status" value="1"/>
</dbReference>
<dbReference type="PANTHER" id="PTHR43302:SF1">
    <property type="entry name" value="NA(+)_H(+) ANTIPORTER NHAB"/>
    <property type="match status" value="1"/>
</dbReference>
<dbReference type="PANTHER" id="PTHR43302">
    <property type="entry name" value="TRANSPORTER ARSB-RELATED"/>
    <property type="match status" value="1"/>
</dbReference>
<dbReference type="Pfam" id="PF06450">
    <property type="entry name" value="NhaB"/>
    <property type="match status" value="1"/>
</dbReference>
<protein>
    <recommendedName>
        <fullName evidence="1">Na(+)/H(+) antiporter NhaB</fullName>
    </recommendedName>
    <alternativeName>
        <fullName evidence="1">Sodium/proton antiporter NhaB</fullName>
    </alternativeName>
</protein>
<feature type="chain" id="PRO_0000333156" description="Na(+)/H(+) antiporter NhaB">
    <location>
        <begin position="1"/>
        <end position="524"/>
    </location>
</feature>
<feature type="transmembrane region" description="Helical" evidence="1">
    <location>
        <begin position="13"/>
        <end position="33"/>
    </location>
</feature>
<feature type="transmembrane region" description="Helical" evidence="1">
    <location>
        <begin position="98"/>
        <end position="118"/>
    </location>
</feature>
<feature type="transmembrane region" description="Helical" evidence="1">
    <location>
        <begin position="140"/>
        <end position="160"/>
    </location>
</feature>
<feature type="transmembrane region" description="Helical" evidence="1">
    <location>
        <begin position="239"/>
        <end position="259"/>
    </location>
</feature>
<feature type="transmembrane region" description="Helical" evidence="1">
    <location>
        <begin position="304"/>
        <end position="324"/>
    </location>
</feature>
<feature type="transmembrane region" description="Helical" evidence="1">
    <location>
        <begin position="325"/>
        <end position="345"/>
    </location>
</feature>
<feature type="transmembrane region" description="Helical" evidence="1">
    <location>
        <begin position="358"/>
        <end position="378"/>
    </location>
</feature>
<feature type="transmembrane region" description="Helical" evidence="1">
    <location>
        <begin position="448"/>
        <end position="468"/>
    </location>
</feature>
<feature type="transmembrane region" description="Helical" evidence="1">
    <location>
        <begin position="479"/>
        <end position="499"/>
    </location>
</feature>
<sequence>MDITNRQAVLKNFLGNSPDWYKLAIMGFLIINPLVFFFVSPFVAGWMLVIEFIFTLAMALKCYPLQPGGLLAIQAVAIGMTSPHQVAEEIANNLEVLLLLVFMVAGIYFMKQLLLFVFTKLLLNIRSKTILSLAFCLASAFLSAFLDALTVIAVVISVSVGFYTIYHNVTSNHSDKDITDDSGIDNQDSHETLEQFRAFLRSLMMHAGVGTALGGVMTMVGEPQNLIIAKSAGWNFADFFIRMLPVTLPVFIFGLLVCLLVEKFKLFGYGAQLPERVRQVLTEYDQQANAKRTKQEKMKLIVQAIIGVWLVLALALHLAEVGLVGLSVIILATSFCGITNEHSLGKAFQEALPFTALLTVFFAVVAVIIEQSLFTPIIQFVLQASPSAQLSLFYLFNGLLSSVSDNVFVGTVYINEARSAFEHGIVSLQQFELLAVAINTGTNLPSVATPNGQAAFLFLLTSALAPLIRLSYGRMVYMALPYTLVMTIVGLLGVEFLLVPMTEWLTQAGWISLPHITNGVAIPH</sequence>
<comment type="function">
    <text evidence="1">Na(+)/H(+) antiporter that extrudes sodium in exchange for external protons.</text>
</comment>
<comment type="catalytic activity">
    <reaction evidence="1">
        <text>2 Na(+)(in) + 3 H(+)(out) = 2 Na(+)(out) + 3 H(+)(in)</text>
        <dbReference type="Rhea" id="RHEA:29247"/>
        <dbReference type="ChEBI" id="CHEBI:15378"/>
        <dbReference type="ChEBI" id="CHEBI:29101"/>
    </reaction>
    <physiologicalReaction direction="left-to-right" evidence="1">
        <dbReference type="Rhea" id="RHEA:29248"/>
    </physiologicalReaction>
</comment>
<comment type="subcellular location">
    <subcellularLocation>
        <location evidence="1">Cell inner membrane</location>
        <topology evidence="1">Multi-pass membrane protein</topology>
    </subcellularLocation>
</comment>
<comment type="similarity">
    <text evidence="1">Belongs to the NhaB Na(+)/H(+) (TC 2.A.34) antiporter family.</text>
</comment>
<reference key="1">
    <citation type="submission" date="2007-02" db="EMBL/GenBank/DDBJ databases">
        <title>Complete sequence of chromosome of Yersinia pestis Pestoides F.</title>
        <authorList>
            <consortium name="US DOE Joint Genome Institute"/>
            <person name="Copeland A."/>
            <person name="Lucas S."/>
            <person name="Lapidus A."/>
            <person name="Barry K."/>
            <person name="Detter J.C."/>
            <person name="Glavina del Rio T."/>
            <person name="Hammon N."/>
            <person name="Israni S."/>
            <person name="Dalin E."/>
            <person name="Tice H."/>
            <person name="Pitluck S."/>
            <person name="Di Bartolo G."/>
            <person name="Chain P."/>
            <person name="Malfatti S."/>
            <person name="Shin M."/>
            <person name="Vergez L."/>
            <person name="Schmutz J."/>
            <person name="Larimer F."/>
            <person name="Land M."/>
            <person name="Hauser L."/>
            <person name="Worsham P."/>
            <person name="Chu M."/>
            <person name="Bearden S."/>
            <person name="Garcia E."/>
            <person name="Richardson P."/>
        </authorList>
    </citation>
    <scope>NUCLEOTIDE SEQUENCE [LARGE SCALE GENOMIC DNA]</scope>
    <source>
        <strain>Pestoides F</strain>
    </source>
</reference>
<gene>
    <name evidence="1" type="primary">nhaB</name>
    <name type="ordered locus">YPDSF_0989</name>
</gene>